<comment type="function">
    <text evidence="1">Member of a network of 50S ribosomal subunit biogenesis factors which assembles along the 30S-50S interface, preventing incorrect 23S rRNA structures from forming. Promotes peptidyl transferase center (PTC) maturation.</text>
</comment>
<comment type="subcellular location">
    <subcellularLocation>
        <location evidence="1">Cytoplasm</location>
    </subcellularLocation>
    <text evidence="1">Associates with late stage pre-50S ribosomal subunits.</text>
</comment>
<comment type="similarity">
    <text evidence="1">Belongs to the DarP family.</text>
</comment>
<accession>C0Q6I8</accession>
<sequence length="183" mass="21392">MTKQPEDWLDDVPGDDIEDEDDEIIWVSKSEIKRDAEELKRLGAELVDLGKNALDKIPLDADLRDAIELAQRIKMEGRRRQLQLIGKMLRQRDVEPIRQALDKLKNRHNQQVVLFHKLEHLRDRLIVEGDDAVAEVLTLWPHADRQQLRSLIRNAKKEKEGNKPPKSARQIFQYLRELAENEG</sequence>
<dbReference type="EMBL" id="CP000857">
    <property type="protein sequence ID" value="ACN48618.1"/>
    <property type="molecule type" value="Genomic_DNA"/>
</dbReference>
<dbReference type="SMR" id="C0Q6I8"/>
<dbReference type="KEGG" id="sei:SPC_4568"/>
<dbReference type="HOGENOM" id="CLU_106757_2_0_6"/>
<dbReference type="Proteomes" id="UP000001599">
    <property type="component" value="Chromosome"/>
</dbReference>
<dbReference type="GO" id="GO:0005829">
    <property type="term" value="C:cytosol"/>
    <property type="evidence" value="ECO:0007669"/>
    <property type="project" value="TreeGrafter"/>
</dbReference>
<dbReference type="GO" id="GO:0043022">
    <property type="term" value="F:ribosome binding"/>
    <property type="evidence" value="ECO:0007669"/>
    <property type="project" value="UniProtKB-UniRule"/>
</dbReference>
<dbReference type="GO" id="GO:0019843">
    <property type="term" value="F:rRNA binding"/>
    <property type="evidence" value="ECO:0007669"/>
    <property type="project" value="UniProtKB-UniRule"/>
</dbReference>
<dbReference type="GO" id="GO:1902626">
    <property type="term" value="P:assembly of large subunit precursor of preribosome"/>
    <property type="evidence" value="ECO:0007669"/>
    <property type="project" value="UniProtKB-UniRule"/>
</dbReference>
<dbReference type="CDD" id="cd16331">
    <property type="entry name" value="YjgA-like"/>
    <property type="match status" value="1"/>
</dbReference>
<dbReference type="FunFam" id="1.10.60.30:FF:000001">
    <property type="entry name" value="UPF0307 protein YjgA"/>
    <property type="match status" value="1"/>
</dbReference>
<dbReference type="FunFam" id="1.10.60.30:FF:000002">
    <property type="entry name" value="UPF0307 protein YjgA"/>
    <property type="match status" value="1"/>
</dbReference>
<dbReference type="Gene3D" id="1.10.60.30">
    <property type="entry name" value="PSPTO4464-like domains"/>
    <property type="match status" value="2"/>
</dbReference>
<dbReference type="HAMAP" id="MF_00765">
    <property type="entry name" value="DarP"/>
    <property type="match status" value="1"/>
</dbReference>
<dbReference type="InterPro" id="IPR006839">
    <property type="entry name" value="DarP"/>
</dbReference>
<dbReference type="InterPro" id="IPR023153">
    <property type="entry name" value="DarP_sf"/>
</dbReference>
<dbReference type="NCBIfam" id="NF003593">
    <property type="entry name" value="PRK05255.1-1"/>
    <property type="match status" value="1"/>
</dbReference>
<dbReference type="PANTHER" id="PTHR38101">
    <property type="entry name" value="UPF0307 PROTEIN YJGA"/>
    <property type="match status" value="1"/>
</dbReference>
<dbReference type="PANTHER" id="PTHR38101:SF1">
    <property type="entry name" value="UPF0307 PROTEIN YJGA"/>
    <property type="match status" value="1"/>
</dbReference>
<dbReference type="Pfam" id="PF04751">
    <property type="entry name" value="DarP"/>
    <property type="match status" value="1"/>
</dbReference>
<dbReference type="PIRSF" id="PIRSF016183">
    <property type="entry name" value="UCP016183"/>
    <property type="match status" value="1"/>
</dbReference>
<dbReference type="SUPFAM" id="SSF158710">
    <property type="entry name" value="PSPTO4464-like"/>
    <property type="match status" value="1"/>
</dbReference>
<keyword id="KW-0963">Cytoplasm</keyword>
<keyword id="KW-0690">Ribosome biogenesis</keyword>
<keyword id="KW-0694">RNA-binding</keyword>
<keyword id="KW-0699">rRNA-binding</keyword>
<proteinExistence type="inferred from homology"/>
<feature type="chain" id="PRO_1000148430" description="Dual-action ribosomal maturation protein DarP">
    <location>
        <begin position="1"/>
        <end position="183"/>
    </location>
</feature>
<organism>
    <name type="scientific">Salmonella paratyphi C (strain RKS4594)</name>
    <dbReference type="NCBI Taxonomy" id="476213"/>
    <lineage>
        <taxon>Bacteria</taxon>
        <taxon>Pseudomonadati</taxon>
        <taxon>Pseudomonadota</taxon>
        <taxon>Gammaproteobacteria</taxon>
        <taxon>Enterobacterales</taxon>
        <taxon>Enterobacteriaceae</taxon>
        <taxon>Salmonella</taxon>
    </lineage>
</organism>
<evidence type="ECO:0000255" key="1">
    <source>
        <dbReference type="HAMAP-Rule" id="MF_00765"/>
    </source>
</evidence>
<protein>
    <recommendedName>
        <fullName evidence="1">Dual-action ribosomal maturation protein DarP</fullName>
    </recommendedName>
    <alternativeName>
        <fullName evidence="1">Large ribosomal subunit assembly factor DarP</fullName>
    </alternativeName>
</protein>
<gene>
    <name evidence="1" type="primary">darP</name>
    <name type="ordered locus">SPC_4568</name>
</gene>
<name>DARP_SALPC</name>
<reference key="1">
    <citation type="journal article" date="2009" name="PLoS ONE">
        <title>Salmonella paratyphi C: genetic divergence from Salmonella choleraesuis and pathogenic convergence with Salmonella typhi.</title>
        <authorList>
            <person name="Liu W.-Q."/>
            <person name="Feng Y."/>
            <person name="Wang Y."/>
            <person name="Zou Q.-H."/>
            <person name="Chen F."/>
            <person name="Guo J.-T."/>
            <person name="Peng Y.-H."/>
            <person name="Jin Y."/>
            <person name="Li Y.-G."/>
            <person name="Hu S.-N."/>
            <person name="Johnston R.N."/>
            <person name="Liu G.-R."/>
            <person name="Liu S.-L."/>
        </authorList>
    </citation>
    <scope>NUCLEOTIDE SEQUENCE [LARGE SCALE GENOMIC DNA]</scope>
    <source>
        <strain>RKS4594</strain>
    </source>
</reference>